<gene>
    <name type="primary">ND6</name>
    <name type="synonym">NAD6</name>
    <name type="synonym">NADH6</name>
</gene>
<name>NU6M_BRALA</name>
<sequence length="167" mass="18731">MQMMLMFLLLLAAIMVIRATSPYYGALATAWLALLAALLLLDADIIFPAIILMLIYLGGMLVVFIYSTAYAADLMPLPINLTMSALMASFGVMLITMISSPSIETLCETKPWLVYDMQPSYMLFDIYQRGSSMFIVAVMILTALLFSILEVVSHRQTTMKWFIHSTY</sequence>
<protein>
    <recommendedName>
        <fullName>NADH-ubiquinone oxidoreductase chain 6</fullName>
        <ecNumber>7.1.1.2</ecNumber>
    </recommendedName>
    <alternativeName>
        <fullName>NADH dehydrogenase subunit 6</fullName>
    </alternativeName>
</protein>
<comment type="function">
    <text evidence="1">Core subunit of the mitochondrial membrane respiratory chain NADH dehydrogenase (Complex I) that is believed to belong to the minimal assembly required for catalysis. Complex I functions in the transfer of electrons from NADH to the respiratory chain. The immediate electron acceptor for the enzyme is believed to be ubiquinone (By similarity).</text>
</comment>
<comment type="catalytic activity">
    <reaction>
        <text>a ubiquinone + NADH + 5 H(+)(in) = a ubiquinol + NAD(+) + 4 H(+)(out)</text>
        <dbReference type="Rhea" id="RHEA:29091"/>
        <dbReference type="Rhea" id="RHEA-COMP:9565"/>
        <dbReference type="Rhea" id="RHEA-COMP:9566"/>
        <dbReference type="ChEBI" id="CHEBI:15378"/>
        <dbReference type="ChEBI" id="CHEBI:16389"/>
        <dbReference type="ChEBI" id="CHEBI:17976"/>
        <dbReference type="ChEBI" id="CHEBI:57540"/>
        <dbReference type="ChEBI" id="CHEBI:57945"/>
        <dbReference type="EC" id="7.1.1.2"/>
    </reaction>
</comment>
<comment type="subcellular location">
    <subcellularLocation>
        <location evidence="3">Mitochondrion membrane</location>
        <topology evidence="3">Multi-pass membrane protein</topology>
    </subcellularLocation>
</comment>
<comment type="similarity">
    <text evidence="3">Belongs to the complex I subunit 6 family.</text>
</comment>
<evidence type="ECO:0000250" key="1"/>
<evidence type="ECO:0000255" key="2"/>
<evidence type="ECO:0000305" key="3"/>
<proteinExistence type="inferred from homology"/>
<dbReference type="EC" id="7.1.1.2"/>
<dbReference type="EMBL" id="Y16474">
    <property type="protein sequence ID" value="CAA76258.1"/>
    <property type="molecule type" value="Genomic_DNA"/>
</dbReference>
<dbReference type="PIR" id="E71391">
    <property type="entry name" value="E71391"/>
</dbReference>
<dbReference type="RefSeq" id="NP_007548.1">
    <property type="nucleotide sequence ID" value="NC_001912.1"/>
</dbReference>
<dbReference type="GeneID" id="808211"/>
<dbReference type="CTD" id="4541"/>
<dbReference type="GO" id="GO:0031966">
    <property type="term" value="C:mitochondrial membrane"/>
    <property type="evidence" value="ECO:0007669"/>
    <property type="project" value="UniProtKB-SubCell"/>
</dbReference>
<dbReference type="GO" id="GO:0008137">
    <property type="term" value="F:NADH dehydrogenase (ubiquinone) activity"/>
    <property type="evidence" value="ECO:0007669"/>
    <property type="project" value="UniProtKB-EC"/>
</dbReference>
<dbReference type="InterPro" id="IPR050269">
    <property type="entry name" value="ComplexI_Subunit6"/>
</dbReference>
<dbReference type="PANTHER" id="PTHR11435">
    <property type="entry name" value="NADH UBIQUINONE OXIDOREDUCTASE SUBUNIT ND6"/>
    <property type="match status" value="1"/>
</dbReference>
<dbReference type="PANTHER" id="PTHR11435:SF1">
    <property type="entry name" value="NADH-UBIQUINONE OXIDOREDUCTASE CHAIN 6"/>
    <property type="match status" value="1"/>
</dbReference>
<reference key="1">
    <citation type="journal article" date="1998" name="Nucleic Acids Res.">
        <title>Complete sequence of the amphioxus (Branchiostoma lanceolatum) mitochondrial genome: relations to vertebrates.</title>
        <authorList>
            <person name="Spruyt N."/>
            <person name="Delarbre C."/>
            <person name="Gachelin G."/>
            <person name="Laudet V."/>
        </authorList>
    </citation>
    <scope>NUCLEOTIDE SEQUENCE [GENOMIC DNA]</scope>
</reference>
<geneLocation type="mitochondrion"/>
<accession>P69233</accession>
<accession>O47432</accession>
<accession>O79423</accession>
<keyword id="KW-0249">Electron transport</keyword>
<keyword id="KW-0472">Membrane</keyword>
<keyword id="KW-0496">Mitochondrion</keyword>
<keyword id="KW-0520">NAD</keyword>
<keyword id="KW-0679">Respiratory chain</keyword>
<keyword id="KW-1278">Translocase</keyword>
<keyword id="KW-0812">Transmembrane</keyword>
<keyword id="KW-1133">Transmembrane helix</keyword>
<keyword id="KW-0813">Transport</keyword>
<keyword id="KW-0830">Ubiquinone</keyword>
<feature type="chain" id="PRO_0000118253" description="NADH-ubiquinone oxidoreductase chain 6">
    <location>
        <begin position="1"/>
        <end position="167"/>
    </location>
</feature>
<feature type="transmembrane region" description="Helical" evidence="2">
    <location>
        <begin position="21"/>
        <end position="41"/>
    </location>
</feature>
<feature type="transmembrane region" description="Helical" evidence="2">
    <location>
        <begin position="45"/>
        <end position="65"/>
    </location>
</feature>
<feature type="transmembrane region" description="Helical" evidence="2">
    <location>
        <begin position="78"/>
        <end position="98"/>
    </location>
</feature>
<feature type="transmembrane region" description="Helical" evidence="2">
    <location>
        <begin position="132"/>
        <end position="152"/>
    </location>
</feature>
<organism>
    <name type="scientific">Branchiostoma lanceolatum</name>
    <name type="common">Common lancelet</name>
    <name type="synonym">Amphioxus lanceolatum</name>
    <dbReference type="NCBI Taxonomy" id="7740"/>
    <lineage>
        <taxon>Eukaryota</taxon>
        <taxon>Metazoa</taxon>
        <taxon>Chordata</taxon>
        <taxon>Cephalochordata</taxon>
        <taxon>Leptocardii</taxon>
        <taxon>Amphioxiformes</taxon>
        <taxon>Branchiostomatidae</taxon>
        <taxon>Branchiostoma</taxon>
    </lineage>
</organism>